<comment type="function">
    <text evidence="1">Might take part in the signal recognition particle (SRP) pathway. This is inferred from the conservation of its genetic proximity to ftsY/ffh. May be a regulatory protein.</text>
</comment>
<comment type="similarity">
    <text evidence="1">Belongs to the UPF0122 family.</text>
</comment>
<protein>
    <recommendedName>
        <fullName evidence="1">UPF0122 protein BT9727_3587</fullName>
    </recommendedName>
</protein>
<evidence type="ECO:0000255" key="1">
    <source>
        <dbReference type="HAMAP-Rule" id="MF_00245"/>
    </source>
</evidence>
<organism>
    <name type="scientific">Bacillus thuringiensis subsp. konkukian (strain 97-27)</name>
    <dbReference type="NCBI Taxonomy" id="281309"/>
    <lineage>
        <taxon>Bacteria</taxon>
        <taxon>Bacillati</taxon>
        <taxon>Bacillota</taxon>
        <taxon>Bacilli</taxon>
        <taxon>Bacillales</taxon>
        <taxon>Bacillaceae</taxon>
        <taxon>Bacillus</taxon>
        <taxon>Bacillus cereus group</taxon>
    </lineage>
</organism>
<proteinExistence type="inferred from homology"/>
<accession>Q6HEW9</accession>
<feature type="chain" id="PRO_1000012518" description="UPF0122 protein BT9727_3587">
    <location>
        <begin position="1"/>
        <end position="110"/>
    </location>
</feature>
<name>Y3587_BACHK</name>
<sequence length="110" mass="13310">MLEKTTRMNYLFDFYQSLLTQKQRSYMSLYYLDDLSLGEIAEEFDVSRQAVYDNIKRTEAMLEEYEEKLVLLQKFQERQRLVAKLKQLISEEEHVNEEMKQVVEAIEKLD</sequence>
<gene>
    <name type="ordered locus">BT9727_3587</name>
</gene>
<dbReference type="EMBL" id="AE017355">
    <property type="protein sequence ID" value="AAT60614.1"/>
    <property type="molecule type" value="Genomic_DNA"/>
</dbReference>
<dbReference type="RefSeq" id="WP_000891062.1">
    <property type="nucleotide sequence ID" value="NC_005957.1"/>
</dbReference>
<dbReference type="RefSeq" id="YP_037907.1">
    <property type="nucleotide sequence ID" value="NC_005957.1"/>
</dbReference>
<dbReference type="SMR" id="Q6HEW9"/>
<dbReference type="KEGG" id="btk:BT9727_3587"/>
<dbReference type="PATRIC" id="fig|281309.8.peg.3825"/>
<dbReference type="HOGENOM" id="CLU_129218_1_0_9"/>
<dbReference type="PRO" id="PR:Q6HEW9"/>
<dbReference type="Proteomes" id="UP000001301">
    <property type="component" value="Chromosome"/>
</dbReference>
<dbReference type="Gene3D" id="1.10.10.10">
    <property type="entry name" value="Winged helix-like DNA-binding domain superfamily/Winged helix DNA-binding domain"/>
    <property type="match status" value="1"/>
</dbReference>
<dbReference type="HAMAP" id="MF_00245">
    <property type="entry name" value="UPF0122"/>
    <property type="match status" value="1"/>
</dbReference>
<dbReference type="InterPro" id="IPR013324">
    <property type="entry name" value="RNA_pol_sigma_r3/r4-like"/>
</dbReference>
<dbReference type="InterPro" id="IPR007394">
    <property type="entry name" value="UPF0122"/>
</dbReference>
<dbReference type="InterPro" id="IPR054831">
    <property type="entry name" value="UPF0122_fam_protein"/>
</dbReference>
<dbReference type="InterPro" id="IPR036388">
    <property type="entry name" value="WH-like_DNA-bd_sf"/>
</dbReference>
<dbReference type="NCBIfam" id="NF001068">
    <property type="entry name" value="PRK00118.1-4"/>
    <property type="match status" value="1"/>
</dbReference>
<dbReference type="NCBIfam" id="NF001070">
    <property type="entry name" value="PRK00118.1-6"/>
    <property type="match status" value="1"/>
</dbReference>
<dbReference type="NCBIfam" id="NF045758">
    <property type="entry name" value="YlxM"/>
    <property type="match status" value="1"/>
</dbReference>
<dbReference type="PANTHER" id="PTHR40083">
    <property type="entry name" value="UPF0122 PROTEIN CBO2450/CLC_2298"/>
    <property type="match status" value="1"/>
</dbReference>
<dbReference type="PANTHER" id="PTHR40083:SF1">
    <property type="entry name" value="UPF0122 PROTEIN YLXM"/>
    <property type="match status" value="1"/>
</dbReference>
<dbReference type="Pfam" id="PF04297">
    <property type="entry name" value="UPF0122"/>
    <property type="match status" value="1"/>
</dbReference>
<dbReference type="SUPFAM" id="SSF88659">
    <property type="entry name" value="Sigma3 and sigma4 domains of RNA polymerase sigma factors"/>
    <property type="match status" value="1"/>
</dbReference>
<reference key="1">
    <citation type="journal article" date="2006" name="J. Bacteriol.">
        <title>Pathogenomic sequence analysis of Bacillus cereus and Bacillus thuringiensis isolates closely related to Bacillus anthracis.</title>
        <authorList>
            <person name="Han C.S."/>
            <person name="Xie G."/>
            <person name="Challacombe J.F."/>
            <person name="Altherr M.R."/>
            <person name="Bhotika S.S."/>
            <person name="Bruce D."/>
            <person name="Campbell C.S."/>
            <person name="Campbell M.L."/>
            <person name="Chen J."/>
            <person name="Chertkov O."/>
            <person name="Cleland C."/>
            <person name="Dimitrijevic M."/>
            <person name="Doggett N.A."/>
            <person name="Fawcett J.J."/>
            <person name="Glavina T."/>
            <person name="Goodwin L.A."/>
            <person name="Hill K.K."/>
            <person name="Hitchcock P."/>
            <person name="Jackson P.J."/>
            <person name="Keim P."/>
            <person name="Kewalramani A.R."/>
            <person name="Longmire J."/>
            <person name="Lucas S."/>
            <person name="Malfatti S."/>
            <person name="McMurry K."/>
            <person name="Meincke L.J."/>
            <person name="Misra M."/>
            <person name="Moseman B.L."/>
            <person name="Mundt M."/>
            <person name="Munk A.C."/>
            <person name="Okinaka R.T."/>
            <person name="Parson-Quintana B."/>
            <person name="Reilly L.P."/>
            <person name="Richardson P."/>
            <person name="Robinson D.L."/>
            <person name="Rubin E."/>
            <person name="Saunders E."/>
            <person name="Tapia R."/>
            <person name="Tesmer J.G."/>
            <person name="Thayer N."/>
            <person name="Thompson L.S."/>
            <person name="Tice H."/>
            <person name="Ticknor L.O."/>
            <person name="Wills P.L."/>
            <person name="Brettin T.S."/>
            <person name="Gilna P."/>
        </authorList>
    </citation>
    <scope>NUCLEOTIDE SEQUENCE [LARGE SCALE GENOMIC DNA]</scope>
    <source>
        <strain>97-27</strain>
    </source>
</reference>